<sequence length="473" mass="51981">MSKPVITRFAPSPTGYLHIGGARTALFNWLYAKHCGGKMLLRIEDTDRERSTEAATAAILDGLTWLGLDWDGEAISQFERAPRHREVAEELVANGKAYYCYASPEELEEMREKARAEGRPPRYDGRWRDRDPSEAPAGVKPVIRIKAPRDGETVVHDAVQGDVRFPNKDLDDFIILRSDGTPTYMHAVVVDDHDMGVTHIIRGGDHLTNAARQTIIYNAMGWDVPQMSHISLIHGADGAKLSKRHGALGVDAYRAMGYLPAALRNYLVRLGWSHGDDEIMSTEQMIEWFDVKDINKGAARFDFQKLEAINGLYMRSSDDQALFDALVAVLPEIEGGKELAEALDDKGRAQLLLAMPGLKERAKTLVELADGAKFIFASRPLALDEKAASLLNDEGRAVLKPVYPVLEAVGEWTAESLDAAIRAHAEAEGLKLGKIAQPLRAALTGRATSPGVFDVLVVLGREESLARIGDQIG</sequence>
<dbReference type="EC" id="6.1.1.17" evidence="1"/>
<dbReference type="EMBL" id="AE014291">
    <property type="protein sequence ID" value="AAN30067.1"/>
    <property type="molecule type" value="Genomic_DNA"/>
</dbReference>
<dbReference type="EMBL" id="CP002997">
    <property type="protein sequence ID" value="AEM18485.1"/>
    <property type="molecule type" value="Genomic_DNA"/>
</dbReference>
<dbReference type="SMR" id="Q8G0E8"/>
<dbReference type="GeneID" id="45052189"/>
<dbReference type="KEGG" id="bms:BR1147"/>
<dbReference type="KEGG" id="bsi:BS1330_I1143"/>
<dbReference type="PATRIC" id="fig|204722.21.peg.1971"/>
<dbReference type="HOGENOM" id="CLU_015768_6_3_5"/>
<dbReference type="PhylomeDB" id="Q8G0E8"/>
<dbReference type="Proteomes" id="UP000007104">
    <property type="component" value="Chromosome I"/>
</dbReference>
<dbReference type="GO" id="GO:0005829">
    <property type="term" value="C:cytosol"/>
    <property type="evidence" value="ECO:0007669"/>
    <property type="project" value="TreeGrafter"/>
</dbReference>
<dbReference type="GO" id="GO:0005524">
    <property type="term" value="F:ATP binding"/>
    <property type="evidence" value="ECO:0007669"/>
    <property type="project" value="UniProtKB-UniRule"/>
</dbReference>
<dbReference type="GO" id="GO:0004818">
    <property type="term" value="F:glutamate-tRNA ligase activity"/>
    <property type="evidence" value="ECO:0007669"/>
    <property type="project" value="UniProtKB-UniRule"/>
</dbReference>
<dbReference type="GO" id="GO:0000049">
    <property type="term" value="F:tRNA binding"/>
    <property type="evidence" value="ECO:0007669"/>
    <property type="project" value="InterPro"/>
</dbReference>
<dbReference type="GO" id="GO:0008270">
    <property type="term" value="F:zinc ion binding"/>
    <property type="evidence" value="ECO:0007669"/>
    <property type="project" value="InterPro"/>
</dbReference>
<dbReference type="GO" id="GO:0006424">
    <property type="term" value="P:glutamyl-tRNA aminoacylation"/>
    <property type="evidence" value="ECO:0007669"/>
    <property type="project" value="UniProtKB-UniRule"/>
</dbReference>
<dbReference type="CDD" id="cd00808">
    <property type="entry name" value="GluRS_core"/>
    <property type="match status" value="1"/>
</dbReference>
<dbReference type="FunFam" id="3.40.50.620:FF:000007">
    <property type="entry name" value="Glutamate--tRNA ligase"/>
    <property type="match status" value="1"/>
</dbReference>
<dbReference type="Gene3D" id="1.10.10.350">
    <property type="match status" value="1"/>
</dbReference>
<dbReference type="Gene3D" id="3.40.50.620">
    <property type="entry name" value="HUPs"/>
    <property type="match status" value="1"/>
</dbReference>
<dbReference type="HAMAP" id="MF_00022">
    <property type="entry name" value="Glu_tRNA_synth_type1"/>
    <property type="match status" value="1"/>
</dbReference>
<dbReference type="InterPro" id="IPR045462">
    <property type="entry name" value="aa-tRNA-synth_I_cd-bd"/>
</dbReference>
<dbReference type="InterPro" id="IPR020751">
    <property type="entry name" value="aa-tRNA-synth_I_codon-bd_sub2"/>
</dbReference>
<dbReference type="InterPro" id="IPR001412">
    <property type="entry name" value="aa-tRNA-synth_I_CS"/>
</dbReference>
<dbReference type="InterPro" id="IPR008925">
    <property type="entry name" value="aa_tRNA-synth_I_cd-bd_sf"/>
</dbReference>
<dbReference type="InterPro" id="IPR004527">
    <property type="entry name" value="Glu-tRNA-ligase_bac/mito"/>
</dbReference>
<dbReference type="InterPro" id="IPR000924">
    <property type="entry name" value="Glu/Gln-tRNA-synth"/>
</dbReference>
<dbReference type="InterPro" id="IPR020058">
    <property type="entry name" value="Glu/Gln-tRNA-synth_Ib_cat-dom"/>
</dbReference>
<dbReference type="InterPro" id="IPR049940">
    <property type="entry name" value="GluQ/Sye"/>
</dbReference>
<dbReference type="InterPro" id="IPR033910">
    <property type="entry name" value="GluRS_core"/>
</dbReference>
<dbReference type="InterPro" id="IPR014729">
    <property type="entry name" value="Rossmann-like_a/b/a_fold"/>
</dbReference>
<dbReference type="NCBIfam" id="TIGR00464">
    <property type="entry name" value="gltX_bact"/>
    <property type="match status" value="1"/>
</dbReference>
<dbReference type="PANTHER" id="PTHR43311">
    <property type="entry name" value="GLUTAMATE--TRNA LIGASE"/>
    <property type="match status" value="1"/>
</dbReference>
<dbReference type="PANTHER" id="PTHR43311:SF2">
    <property type="entry name" value="GLUTAMATE--TRNA LIGASE, MITOCHONDRIAL-RELATED"/>
    <property type="match status" value="1"/>
</dbReference>
<dbReference type="Pfam" id="PF19269">
    <property type="entry name" value="Anticodon_2"/>
    <property type="match status" value="1"/>
</dbReference>
<dbReference type="Pfam" id="PF00749">
    <property type="entry name" value="tRNA-synt_1c"/>
    <property type="match status" value="1"/>
</dbReference>
<dbReference type="PRINTS" id="PR00987">
    <property type="entry name" value="TRNASYNTHGLU"/>
</dbReference>
<dbReference type="SUPFAM" id="SSF48163">
    <property type="entry name" value="An anticodon-binding domain of class I aminoacyl-tRNA synthetases"/>
    <property type="match status" value="1"/>
</dbReference>
<dbReference type="SUPFAM" id="SSF52374">
    <property type="entry name" value="Nucleotidylyl transferase"/>
    <property type="match status" value="1"/>
</dbReference>
<dbReference type="PROSITE" id="PS00178">
    <property type="entry name" value="AA_TRNA_LIGASE_I"/>
    <property type="match status" value="1"/>
</dbReference>
<proteinExistence type="inferred from homology"/>
<organism>
    <name type="scientific">Brucella suis biovar 1 (strain 1330)</name>
    <dbReference type="NCBI Taxonomy" id="204722"/>
    <lineage>
        <taxon>Bacteria</taxon>
        <taxon>Pseudomonadati</taxon>
        <taxon>Pseudomonadota</taxon>
        <taxon>Alphaproteobacteria</taxon>
        <taxon>Hyphomicrobiales</taxon>
        <taxon>Brucellaceae</taxon>
        <taxon>Brucella/Ochrobactrum group</taxon>
        <taxon>Brucella</taxon>
    </lineage>
</organism>
<evidence type="ECO:0000255" key="1">
    <source>
        <dbReference type="HAMAP-Rule" id="MF_00022"/>
    </source>
</evidence>
<evidence type="ECO:0000256" key="2">
    <source>
        <dbReference type="SAM" id="MobiDB-lite"/>
    </source>
</evidence>
<feature type="chain" id="PRO_0000119524" description="Glutamate--tRNA ligase 2">
    <location>
        <begin position="1"/>
        <end position="473"/>
    </location>
</feature>
<feature type="region of interest" description="Disordered" evidence="2">
    <location>
        <begin position="113"/>
        <end position="136"/>
    </location>
</feature>
<feature type="short sequence motif" description="'HIGH' region" evidence="1">
    <location>
        <begin position="11"/>
        <end position="21"/>
    </location>
</feature>
<feature type="short sequence motif" description="'KMSKS' region" evidence="1">
    <location>
        <begin position="240"/>
        <end position="244"/>
    </location>
</feature>
<feature type="compositionally biased region" description="Basic and acidic residues" evidence="2">
    <location>
        <begin position="113"/>
        <end position="133"/>
    </location>
</feature>
<feature type="binding site" evidence="1">
    <location>
        <position position="243"/>
    </location>
    <ligand>
        <name>ATP</name>
        <dbReference type="ChEBI" id="CHEBI:30616"/>
    </ligand>
</feature>
<protein>
    <recommendedName>
        <fullName evidence="1">Glutamate--tRNA ligase 2</fullName>
        <ecNumber evidence="1">6.1.1.17</ecNumber>
    </recommendedName>
    <alternativeName>
        <fullName evidence="1">Glutamyl-tRNA synthetase 2</fullName>
        <shortName evidence="1">GluRS 2</shortName>
    </alternativeName>
</protein>
<reference key="1">
    <citation type="journal article" date="2002" name="Proc. Natl. Acad. Sci. U.S.A.">
        <title>The Brucella suis genome reveals fundamental similarities between animal and plant pathogens and symbionts.</title>
        <authorList>
            <person name="Paulsen I.T."/>
            <person name="Seshadri R."/>
            <person name="Nelson K.E."/>
            <person name="Eisen J.A."/>
            <person name="Heidelberg J.F."/>
            <person name="Read T.D."/>
            <person name="Dodson R.J."/>
            <person name="Umayam L.A."/>
            <person name="Brinkac L.M."/>
            <person name="Beanan M.J."/>
            <person name="Daugherty S.C."/>
            <person name="DeBoy R.T."/>
            <person name="Durkin A.S."/>
            <person name="Kolonay J.F."/>
            <person name="Madupu R."/>
            <person name="Nelson W.C."/>
            <person name="Ayodeji B."/>
            <person name="Kraul M."/>
            <person name="Shetty J."/>
            <person name="Malek J.A."/>
            <person name="Van Aken S.E."/>
            <person name="Riedmuller S."/>
            <person name="Tettelin H."/>
            <person name="Gill S.R."/>
            <person name="White O."/>
            <person name="Salzberg S.L."/>
            <person name="Hoover D.L."/>
            <person name="Lindler L.E."/>
            <person name="Halling S.M."/>
            <person name="Boyle S.M."/>
            <person name="Fraser C.M."/>
        </authorList>
    </citation>
    <scope>NUCLEOTIDE SEQUENCE [LARGE SCALE GENOMIC DNA]</scope>
    <source>
        <strain>1330</strain>
    </source>
</reference>
<reference key="2">
    <citation type="journal article" date="2011" name="J. Bacteriol.">
        <title>Revised genome sequence of Brucella suis 1330.</title>
        <authorList>
            <person name="Tae H."/>
            <person name="Shallom S."/>
            <person name="Settlage R."/>
            <person name="Preston D."/>
            <person name="Adams L.G."/>
            <person name="Garner H.R."/>
        </authorList>
    </citation>
    <scope>NUCLEOTIDE SEQUENCE [LARGE SCALE GENOMIC DNA]</scope>
    <source>
        <strain>1330</strain>
    </source>
</reference>
<gene>
    <name evidence="1" type="primary">gltX2</name>
    <name type="synonym">gltX1</name>
    <name type="ordered locus">BR1147</name>
    <name type="ordered locus">BS1330_I1143</name>
</gene>
<keyword id="KW-0030">Aminoacyl-tRNA synthetase</keyword>
<keyword id="KW-0067">ATP-binding</keyword>
<keyword id="KW-0963">Cytoplasm</keyword>
<keyword id="KW-0436">Ligase</keyword>
<keyword id="KW-0547">Nucleotide-binding</keyword>
<keyword id="KW-0648">Protein biosynthesis</keyword>
<name>SYE2_BRUSU</name>
<accession>Q8G0E8</accession>
<accession>G0KA69</accession>
<comment type="function">
    <text evidence="1">Catalyzes the attachment of glutamate to tRNA(Glu) in a two-step reaction: glutamate is first activated by ATP to form Glu-AMP and then transferred to the acceptor end of tRNA(Glu).</text>
</comment>
<comment type="catalytic activity">
    <reaction evidence="1">
        <text>tRNA(Glu) + L-glutamate + ATP = L-glutamyl-tRNA(Glu) + AMP + diphosphate</text>
        <dbReference type="Rhea" id="RHEA:23540"/>
        <dbReference type="Rhea" id="RHEA-COMP:9663"/>
        <dbReference type="Rhea" id="RHEA-COMP:9680"/>
        <dbReference type="ChEBI" id="CHEBI:29985"/>
        <dbReference type="ChEBI" id="CHEBI:30616"/>
        <dbReference type="ChEBI" id="CHEBI:33019"/>
        <dbReference type="ChEBI" id="CHEBI:78442"/>
        <dbReference type="ChEBI" id="CHEBI:78520"/>
        <dbReference type="ChEBI" id="CHEBI:456215"/>
        <dbReference type="EC" id="6.1.1.17"/>
    </reaction>
</comment>
<comment type="subunit">
    <text evidence="1">Monomer.</text>
</comment>
<comment type="subcellular location">
    <subcellularLocation>
        <location evidence="1">Cytoplasm</location>
    </subcellularLocation>
</comment>
<comment type="similarity">
    <text evidence="1">Belongs to the class-I aminoacyl-tRNA synthetase family. Glutamate--tRNA ligase type 1 subfamily.</text>
</comment>